<name>18K2_MYCAV</name>
<dbReference type="EMBL" id="L12237">
    <property type="protein sequence ID" value="AAA25349.1"/>
    <property type="molecule type" value="Genomic_DNA"/>
</dbReference>
<dbReference type="SMR" id="P46731"/>
<dbReference type="CDD" id="cd06464">
    <property type="entry name" value="ACD_sHsps-like"/>
    <property type="match status" value="1"/>
</dbReference>
<dbReference type="Gene3D" id="2.60.40.790">
    <property type="match status" value="1"/>
</dbReference>
<dbReference type="InterPro" id="IPR002068">
    <property type="entry name" value="A-crystallin/Hsp20_dom"/>
</dbReference>
<dbReference type="InterPro" id="IPR008978">
    <property type="entry name" value="HSP20-like_chaperone"/>
</dbReference>
<dbReference type="InterPro" id="IPR031107">
    <property type="entry name" value="Small_HSP"/>
</dbReference>
<dbReference type="PANTHER" id="PTHR11527">
    <property type="entry name" value="HEAT-SHOCK PROTEIN 20 FAMILY MEMBER"/>
    <property type="match status" value="1"/>
</dbReference>
<dbReference type="Pfam" id="PF00011">
    <property type="entry name" value="HSP20"/>
    <property type="match status" value="1"/>
</dbReference>
<dbReference type="SUPFAM" id="SSF49764">
    <property type="entry name" value="HSP20-like chaperones"/>
    <property type="match status" value="1"/>
</dbReference>
<dbReference type="PROSITE" id="PS01031">
    <property type="entry name" value="SHSP"/>
    <property type="match status" value="1"/>
</dbReference>
<sequence length="138" mass="15949">MVLMRTDPFRDLDRWTQQVLGTRRPAVMPMDAWRDGDQFVVEFDLPGVNADSLDLDVERNVLTVRAERPDLDQNREMVSAERPRGVFSRQLFLGDNLDTDKIEANYHDGVLRLTIPVAEKAKPRRIEINHNHRTAINA</sequence>
<organism>
    <name type="scientific">Mycobacterium avium</name>
    <dbReference type="NCBI Taxonomy" id="1764"/>
    <lineage>
        <taxon>Bacteria</taxon>
        <taxon>Bacillati</taxon>
        <taxon>Actinomycetota</taxon>
        <taxon>Actinomycetes</taxon>
        <taxon>Mycobacteriales</taxon>
        <taxon>Mycobacteriaceae</taxon>
        <taxon>Mycobacterium</taxon>
        <taxon>Mycobacterium avium complex (MAC)</taxon>
    </lineage>
</organism>
<proteinExistence type="inferred from homology"/>
<reference key="1">
    <citation type="journal article" date="1993" name="Infect. Immun.">
        <title>Homologs of Mycobacterium leprae 18-kilodalton and Mycobacterium tuberculosis 19-kilodalton antigens in other mycobacteria.</title>
        <authorList>
            <person name="Booth R.J."/>
            <person name="Williams D.L."/>
            <person name="Moudgil K.D."/>
            <person name="Noonan L.C."/>
            <person name="Grandison P.M."/>
            <person name="McKee J.J."/>
            <person name="Prestidge R.L."/>
            <person name="Watson J.D."/>
        </authorList>
    </citation>
    <scope>NUCLEOTIDE SEQUENCE [GENOMIC DNA]</scope>
    <source>
        <strain>Serovar 2</strain>
    </source>
</reference>
<feature type="chain" id="PRO_0000126013" description="18 kDa antigen 2">
    <location>
        <begin position="1"/>
        <end position="138"/>
    </location>
</feature>
<feature type="domain" description="sHSP" evidence="1">
    <location>
        <begin position="21"/>
        <end position="131"/>
    </location>
</feature>
<protein>
    <recommendedName>
        <fullName>18 kDa antigen 2</fullName>
    </recommendedName>
    <alternativeName>
        <fullName>Clone MAVC83</fullName>
    </alternativeName>
</protein>
<comment type="function">
    <text>Not known. This protein is one of the major immune reactive proteins in mycobacteria.</text>
</comment>
<comment type="similarity">
    <text evidence="1">Belongs to the small heat shock protein (HSP20) family.</text>
</comment>
<evidence type="ECO:0000255" key="1">
    <source>
        <dbReference type="PROSITE-ProRule" id="PRU00285"/>
    </source>
</evidence>
<accession>P46731</accession>